<evidence type="ECO:0000255" key="1">
    <source>
        <dbReference type="HAMAP-Rule" id="MF_00761"/>
    </source>
</evidence>
<sequence length="167" mass="18254">MAVADDIALIRKQEEVLVFPAFDEAVAFKIGSAIRARAIAENLPIIVDIRLWDRPLFYAAMPGSNASNPDWARRKINVVRRFLRSTYRMVLEQQRPDRAFKIGEGLDVSDYVLAGGGFPVTVKGAGVIGVIAVSGLPEREDHGVVIDALCDHLGIDKRGLVLASEAE</sequence>
<accession>Q98CH8</accession>
<proteinExistence type="inferred from homology"/>
<name>Y5144_RHILO</name>
<reference key="1">
    <citation type="journal article" date="2000" name="DNA Res.">
        <title>Complete genome structure of the nitrogen-fixing symbiotic bacterium Mesorhizobium loti.</title>
        <authorList>
            <person name="Kaneko T."/>
            <person name="Nakamura Y."/>
            <person name="Sato S."/>
            <person name="Asamizu E."/>
            <person name="Kato T."/>
            <person name="Sasamoto S."/>
            <person name="Watanabe A."/>
            <person name="Idesawa K."/>
            <person name="Ishikawa A."/>
            <person name="Kawashima K."/>
            <person name="Kimura T."/>
            <person name="Kishida Y."/>
            <person name="Kiyokawa C."/>
            <person name="Kohara M."/>
            <person name="Matsumoto M."/>
            <person name="Matsuno A."/>
            <person name="Mochizuki Y."/>
            <person name="Nakayama S."/>
            <person name="Nakazaki N."/>
            <person name="Shimpo S."/>
            <person name="Sugimoto M."/>
            <person name="Takeuchi C."/>
            <person name="Yamada M."/>
            <person name="Tabata S."/>
        </authorList>
    </citation>
    <scope>NUCLEOTIDE SEQUENCE [LARGE SCALE GENOMIC DNA]</scope>
    <source>
        <strain>LMG 29417 / CECT 9101 / MAFF 303099</strain>
    </source>
</reference>
<comment type="similarity">
    <text evidence="1">Belongs to the UPF0303 family.</text>
</comment>
<dbReference type="EMBL" id="BA000012">
    <property type="protein sequence ID" value="BAB51643.1"/>
    <property type="molecule type" value="Genomic_DNA"/>
</dbReference>
<dbReference type="RefSeq" id="WP_010912982.1">
    <property type="nucleotide sequence ID" value="NC_002678.2"/>
</dbReference>
<dbReference type="SMR" id="Q98CH8"/>
<dbReference type="KEGG" id="mlo:mlr5144"/>
<dbReference type="PATRIC" id="fig|266835.9.peg.4065"/>
<dbReference type="eggNOG" id="COG4702">
    <property type="taxonomic scope" value="Bacteria"/>
</dbReference>
<dbReference type="HOGENOM" id="CLU_101036_2_2_5"/>
<dbReference type="Proteomes" id="UP000000552">
    <property type="component" value="Chromosome"/>
</dbReference>
<dbReference type="Gene3D" id="3.30.450.150">
    <property type="entry name" value="Haem-degrading domain"/>
    <property type="match status" value="1"/>
</dbReference>
<dbReference type="HAMAP" id="MF_00761">
    <property type="entry name" value="UPF0303"/>
    <property type="match status" value="1"/>
</dbReference>
<dbReference type="InterPro" id="IPR005624">
    <property type="entry name" value="PduO/GlcC-like"/>
</dbReference>
<dbReference type="InterPro" id="IPR038084">
    <property type="entry name" value="PduO/GlcC-like_sf"/>
</dbReference>
<dbReference type="InterPro" id="IPR010371">
    <property type="entry name" value="YBR137W-like"/>
</dbReference>
<dbReference type="NCBIfam" id="NF002696">
    <property type="entry name" value="PRK02487.1-5"/>
    <property type="match status" value="1"/>
</dbReference>
<dbReference type="PANTHER" id="PTHR28255">
    <property type="match status" value="1"/>
</dbReference>
<dbReference type="PANTHER" id="PTHR28255:SF1">
    <property type="entry name" value="UPF0303 PROTEIN YBR137W"/>
    <property type="match status" value="1"/>
</dbReference>
<dbReference type="Pfam" id="PF03928">
    <property type="entry name" value="HbpS-like"/>
    <property type="match status" value="1"/>
</dbReference>
<dbReference type="PIRSF" id="PIRSF008757">
    <property type="entry name" value="UCP008757"/>
    <property type="match status" value="1"/>
</dbReference>
<dbReference type="SUPFAM" id="SSF143744">
    <property type="entry name" value="GlcG-like"/>
    <property type="match status" value="1"/>
</dbReference>
<gene>
    <name type="ordered locus">mlr5144</name>
</gene>
<organism>
    <name type="scientific">Mesorhizobium japonicum (strain LMG 29417 / CECT 9101 / MAFF 303099)</name>
    <name type="common">Mesorhizobium loti (strain MAFF 303099)</name>
    <dbReference type="NCBI Taxonomy" id="266835"/>
    <lineage>
        <taxon>Bacteria</taxon>
        <taxon>Pseudomonadati</taxon>
        <taxon>Pseudomonadota</taxon>
        <taxon>Alphaproteobacteria</taxon>
        <taxon>Hyphomicrobiales</taxon>
        <taxon>Phyllobacteriaceae</taxon>
        <taxon>Mesorhizobium</taxon>
    </lineage>
</organism>
<protein>
    <recommendedName>
        <fullName evidence="1">UPF0303 protein mlr5144</fullName>
    </recommendedName>
</protein>
<feature type="chain" id="PRO_0000208919" description="UPF0303 protein mlr5144">
    <location>
        <begin position="1"/>
        <end position="167"/>
    </location>
</feature>